<dbReference type="EC" id="5.2.1.8" evidence="1"/>
<dbReference type="EMBL" id="CP000267">
    <property type="protein sequence ID" value="ABD69285.1"/>
    <property type="molecule type" value="Genomic_DNA"/>
</dbReference>
<dbReference type="RefSeq" id="WP_011463853.1">
    <property type="nucleotide sequence ID" value="NC_007908.1"/>
</dbReference>
<dbReference type="SMR" id="Q21Y68"/>
<dbReference type="STRING" id="338969.Rfer_1553"/>
<dbReference type="KEGG" id="rfr:Rfer_1553"/>
<dbReference type="eggNOG" id="COG0544">
    <property type="taxonomic scope" value="Bacteria"/>
</dbReference>
<dbReference type="HOGENOM" id="CLU_033058_2_0_4"/>
<dbReference type="OrthoDB" id="9767721at2"/>
<dbReference type="Proteomes" id="UP000008332">
    <property type="component" value="Chromosome"/>
</dbReference>
<dbReference type="GO" id="GO:0005737">
    <property type="term" value="C:cytoplasm"/>
    <property type="evidence" value="ECO:0007669"/>
    <property type="project" value="UniProtKB-SubCell"/>
</dbReference>
<dbReference type="GO" id="GO:0003755">
    <property type="term" value="F:peptidyl-prolyl cis-trans isomerase activity"/>
    <property type="evidence" value="ECO:0007669"/>
    <property type="project" value="UniProtKB-UniRule"/>
</dbReference>
<dbReference type="GO" id="GO:0044183">
    <property type="term" value="F:protein folding chaperone"/>
    <property type="evidence" value="ECO:0007669"/>
    <property type="project" value="TreeGrafter"/>
</dbReference>
<dbReference type="GO" id="GO:0043022">
    <property type="term" value="F:ribosome binding"/>
    <property type="evidence" value="ECO:0007669"/>
    <property type="project" value="TreeGrafter"/>
</dbReference>
<dbReference type="GO" id="GO:0051083">
    <property type="term" value="P:'de novo' cotranslational protein folding"/>
    <property type="evidence" value="ECO:0007669"/>
    <property type="project" value="TreeGrafter"/>
</dbReference>
<dbReference type="GO" id="GO:0051301">
    <property type="term" value="P:cell division"/>
    <property type="evidence" value="ECO:0007669"/>
    <property type="project" value="UniProtKB-KW"/>
</dbReference>
<dbReference type="GO" id="GO:0061077">
    <property type="term" value="P:chaperone-mediated protein folding"/>
    <property type="evidence" value="ECO:0007669"/>
    <property type="project" value="TreeGrafter"/>
</dbReference>
<dbReference type="GO" id="GO:0015031">
    <property type="term" value="P:protein transport"/>
    <property type="evidence" value="ECO:0007669"/>
    <property type="project" value="UniProtKB-UniRule"/>
</dbReference>
<dbReference type="GO" id="GO:0043335">
    <property type="term" value="P:protein unfolding"/>
    <property type="evidence" value="ECO:0007669"/>
    <property type="project" value="TreeGrafter"/>
</dbReference>
<dbReference type="FunFam" id="3.10.50.40:FF:000001">
    <property type="entry name" value="Trigger factor"/>
    <property type="match status" value="1"/>
</dbReference>
<dbReference type="Gene3D" id="3.10.50.40">
    <property type="match status" value="1"/>
</dbReference>
<dbReference type="Gene3D" id="3.30.70.1050">
    <property type="entry name" value="Trigger factor ribosome-binding domain"/>
    <property type="match status" value="1"/>
</dbReference>
<dbReference type="Gene3D" id="1.10.3120.10">
    <property type="entry name" value="Trigger factor, C-terminal domain"/>
    <property type="match status" value="1"/>
</dbReference>
<dbReference type="HAMAP" id="MF_00303">
    <property type="entry name" value="Trigger_factor_Tig"/>
    <property type="match status" value="1"/>
</dbReference>
<dbReference type="InterPro" id="IPR046357">
    <property type="entry name" value="PPIase_dom_sf"/>
</dbReference>
<dbReference type="InterPro" id="IPR001179">
    <property type="entry name" value="PPIase_FKBP_dom"/>
</dbReference>
<dbReference type="InterPro" id="IPR005215">
    <property type="entry name" value="Trig_fac"/>
</dbReference>
<dbReference type="InterPro" id="IPR008880">
    <property type="entry name" value="Trigger_fac_C"/>
</dbReference>
<dbReference type="InterPro" id="IPR037041">
    <property type="entry name" value="Trigger_fac_C_sf"/>
</dbReference>
<dbReference type="InterPro" id="IPR008881">
    <property type="entry name" value="Trigger_fac_ribosome-bd_bac"/>
</dbReference>
<dbReference type="InterPro" id="IPR036611">
    <property type="entry name" value="Trigger_fac_ribosome-bd_sf"/>
</dbReference>
<dbReference type="InterPro" id="IPR027304">
    <property type="entry name" value="Trigger_fact/SurA_dom_sf"/>
</dbReference>
<dbReference type="NCBIfam" id="TIGR00115">
    <property type="entry name" value="tig"/>
    <property type="match status" value="1"/>
</dbReference>
<dbReference type="PANTHER" id="PTHR30560">
    <property type="entry name" value="TRIGGER FACTOR CHAPERONE AND PEPTIDYL-PROLYL CIS/TRANS ISOMERASE"/>
    <property type="match status" value="1"/>
</dbReference>
<dbReference type="PANTHER" id="PTHR30560:SF3">
    <property type="entry name" value="TRIGGER FACTOR-LIKE PROTEIN TIG, CHLOROPLASTIC"/>
    <property type="match status" value="1"/>
</dbReference>
<dbReference type="Pfam" id="PF00254">
    <property type="entry name" value="FKBP_C"/>
    <property type="match status" value="1"/>
</dbReference>
<dbReference type="Pfam" id="PF05698">
    <property type="entry name" value="Trigger_C"/>
    <property type="match status" value="1"/>
</dbReference>
<dbReference type="Pfam" id="PF05697">
    <property type="entry name" value="Trigger_N"/>
    <property type="match status" value="1"/>
</dbReference>
<dbReference type="PIRSF" id="PIRSF003095">
    <property type="entry name" value="Trigger_factor"/>
    <property type="match status" value="1"/>
</dbReference>
<dbReference type="SUPFAM" id="SSF54534">
    <property type="entry name" value="FKBP-like"/>
    <property type="match status" value="1"/>
</dbReference>
<dbReference type="SUPFAM" id="SSF109998">
    <property type="entry name" value="Triger factor/SurA peptide-binding domain-like"/>
    <property type="match status" value="1"/>
</dbReference>
<dbReference type="SUPFAM" id="SSF102735">
    <property type="entry name" value="Trigger factor ribosome-binding domain"/>
    <property type="match status" value="1"/>
</dbReference>
<dbReference type="PROSITE" id="PS50059">
    <property type="entry name" value="FKBP_PPIASE"/>
    <property type="match status" value="1"/>
</dbReference>
<reference key="1">
    <citation type="submission" date="2006-02" db="EMBL/GenBank/DDBJ databases">
        <title>Complete sequence of chromosome of Rhodoferax ferrireducens DSM 15236.</title>
        <authorList>
            <person name="Copeland A."/>
            <person name="Lucas S."/>
            <person name="Lapidus A."/>
            <person name="Barry K."/>
            <person name="Detter J.C."/>
            <person name="Glavina del Rio T."/>
            <person name="Hammon N."/>
            <person name="Israni S."/>
            <person name="Pitluck S."/>
            <person name="Brettin T."/>
            <person name="Bruce D."/>
            <person name="Han C."/>
            <person name="Tapia R."/>
            <person name="Gilna P."/>
            <person name="Kiss H."/>
            <person name="Schmutz J."/>
            <person name="Larimer F."/>
            <person name="Land M."/>
            <person name="Kyrpides N."/>
            <person name="Ivanova N."/>
            <person name="Richardson P."/>
        </authorList>
    </citation>
    <scope>NUCLEOTIDE SEQUENCE [LARGE SCALE GENOMIC DNA]</scope>
    <source>
        <strain>ATCC BAA-621 / DSM 15236 / T118</strain>
    </source>
</reference>
<organism>
    <name type="scientific">Albidiferax ferrireducens (strain ATCC BAA-621 / DSM 15236 / T118)</name>
    <name type="common">Rhodoferax ferrireducens</name>
    <dbReference type="NCBI Taxonomy" id="338969"/>
    <lineage>
        <taxon>Bacteria</taxon>
        <taxon>Pseudomonadati</taxon>
        <taxon>Pseudomonadota</taxon>
        <taxon>Betaproteobacteria</taxon>
        <taxon>Burkholderiales</taxon>
        <taxon>Comamonadaceae</taxon>
        <taxon>Rhodoferax</taxon>
    </lineage>
</organism>
<sequence>MAVTVETLEKLERKMTLTLPVGIVESEVQSRLKKLARTIKMDGFRPGKVPMNVVSQRYGYSVHYEVMNDKVGEAFFNAANEAKLRVAGQPRISESEASPEGEMAFDAVFEVYPDVKIGDLSTAEVEKISAEVTDSAIDKTVDILRKQRRTFSQRPHDAAAQDGDRVTVDFEGKIDGEVFAGGKAEDFQFIVGDGQMLKEFEEATRGMKSGESKTFQMAFPADYHGKDVAGKTADFMVTLKKIEAAHLPDVDGALAKSLGIEDATVEGLRADIKKNLAREVKARLLARNKQAVMDALVGKAELDLPNASVQAEVNRLMEGARADLKQRGIKDADKAPMPEDIFRPQAERRVRLGLVVAELVRSNNLQATPEQVKAHIEELAASYEKPADVMRWYYSDNNRLAEVEAIVIENNVTNFVLAQAKVSDKALSFDELMAQN</sequence>
<evidence type="ECO:0000255" key="1">
    <source>
        <dbReference type="HAMAP-Rule" id="MF_00303"/>
    </source>
</evidence>
<accession>Q21Y68</accession>
<proteinExistence type="inferred from homology"/>
<feature type="chain" id="PRO_0000256604" description="Trigger factor">
    <location>
        <begin position="1"/>
        <end position="436"/>
    </location>
</feature>
<feature type="domain" description="PPIase FKBP-type" evidence="1">
    <location>
        <begin position="163"/>
        <end position="248"/>
    </location>
</feature>
<comment type="function">
    <text evidence="1">Involved in protein export. Acts as a chaperone by maintaining the newly synthesized protein in an open conformation. Functions as a peptidyl-prolyl cis-trans isomerase.</text>
</comment>
<comment type="catalytic activity">
    <reaction evidence="1">
        <text>[protein]-peptidylproline (omega=180) = [protein]-peptidylproline (omega=0)</text>
        <dbReference type="Rhea" id="RHEA:16237"/>
        <dbReference type="Rhea" id="RHEA-COMP:10747"/>
        <dbReference type="Rhea" id="RHEA-COMP:10748"/>
        <dbReference type="ChEBI" id="CHEBI:83833"/>
        <dbReference type="ChEBI" id="CHEBI:83834"/>
        <dbReference type="EC" id="5.2.1.8"/>
    </reaction>
</comment>
<comment type="subcellular location">
    <subcellularLocation>
        <location>Cytoplasm</location>
    </subcellularLocation>
    <text evidence="1">About half TF is bound to the ribosome near the polypeptide exit tunnel while the other half is free in the cytoplasm.</text>
</comment>
<comment type="domain">
    <text evidence="1">Consists of 3 domains; the N-terminus binds the ribosome, the middle domain has PPIase activity, while the C-terminus has intrinsic chaperone activity on its own.</text>
</comment>
<comment type="similarity">
    <text evidence="1">Belongs to the FKBP-type PPIase family. Tig subfamily.</text>
</comment>
<name>TIG_ALBFT</name>
<gene>
    <name evidence="1" type="primary">tig</name>
    <name type="ordered locus">Rfer_1553</name>
</gene>
<protein>
    <recommendedName>
        <fullName evidence="1">Trigger factor</fullName>
        <shortName evidence="1">TF</shortName>
        <ecNumber evidence="1">5.2.1.8</ecNumber>
    </recommendedName>
    <alternativeName>
        <fullName evidence="1">PPIase</fullName>
    </alternativeName>
</protein>
<keyword id="KW-0131">Cell cycle</keyword>
<keyword id="KW-0132">Cell division</keyword>
<keyword id="KW-0143">Chaperone</keyword>
<keyword id="KW-0963">Cytoplasm</keyword>
<keyword id="KW-0413">Isomerase</keyword>
<keyword id="KW-1185">Reference proteome</keyword>
<keyword id="KW-0697">Rotamase</keyword>